<evidence type="ECO:0000250" key="1"/>
<evidence type="ECO:0000256" key="2">
    <source>
        <dbReference type="SAM" id="MobiDB-lite"/>
    </source>
</evidence>
<evidence type="ECO:0000305" key="3"/>
<dbReference type="EMBL" id="Z29227">
    <property type="protein sequence ID" value="CAA82426.1"/>
    <property type="molecule type" value="Genomic_DNA"/>
</dbReference>
<dbReference type="PIR" id="S41254">
    <property type="entry name" value="S41254"/>
</dbReference>
<dbReference type="SMR" id="P69631"/>
<dbReference type="GO" id="GO:0009507">
    <property type="term" value="C:chloroplast"/>
    <property type="evidence" value="ECO:0007669"/>
    <property type="project" value="UniProtKB-SubCell"/>
</dbReference>
<dbReference type="GO" id="GO:0015935">
    <property type="term" value="C:small ribosomal subunit"/>
    <property type="evidence" value="ECO:0007669"/>
    <property type="project" value="InterPro"/>
</dbReference>
<dbReference type="GO" id="GO:0019843">
    <property type="term" value="F:rRNA binding"/>
    <property type="evidence" value="ECO:0007669"/>
    <property type="project" value="UniProtKB-KW"/>
</dbReference>
<dbReference type="GO" id="GO:0003735">
    <property type="term" value="F:structural constituent of ribosome"/>
    <property type="evidence" value="ECO:0007669"/>
    <property type="project" value="InterPro"/>
</dbReference>
<dbReference type="GO" id="GO:0042274">
    <property type="term" value="P:ribosomal small subunit biogenesis"/>
    <property type="evidence" value="ECO:0007669"/>
    <property type="project" value="TreeGrafter"/>
</dbReference>
<dbReference type="GO" id="GO:0006412">
    <property type="term" value="P:translation"/>
    <property type="evidence" value="ECO:0007669"/>
    <property type="project" value="InterPro"/>
</dbReference>
<dbReference type="CDD" id="cd00165">
    <property type="entry name" value="S4"/>
    <property type="match status" value="1"/>
</dbReference>
<dbReference type="FunFam" id="1.10.1050.10:FF:000002">
    <property type="entry name" value="30S ribosomal protein S4, chloroplastic"/>
    <property type="match status" value="1"/>
</dbReference>
<dbReference type="FunFam" id="3.10.290.10:FF:000081">
    <property type="entry name" value="30S ribosomal protein S4, chloroplastic"/>
    <property type="match status" value="1"/>
</dbReference>
<dbReference type="Gene3D" id="1.10.1050.10">
    <property type="entry name" value="Ribosomal Protein S4 Delta 41, Chain A, domain 1"/>
    <property type="match status" value="1"/>
</dbReference>
<dbReference type="Gene3D" id="3.10.290.10">
    <property type="entry name" value="RNA-binding S4 domain"/>
    <property type="match status" value="1"/>
</dbReference>
<dbReference type="HAMAP" id="MF_01306_B">
    <property type="entry name" value="Ribosomal_uS4_B"/>
    <property type="match status" value="1"/>
</dbReference>
<dbReference type="InterPro" id="IPR022801">
    <property type="entry name" value="Ribosomal_uS4"/>
</dbReference>
<dbReference type="InterPro" id="IPR005709">
    <property type="entry name" value="Ribosomal_uS4_bac-type"/>
</dbReference>
<dbReference type="InterPro" id="IPR018079">
    <property type="entry name" value="Ribosomal_uS4_CS"/>
</dbReference>
<dbReference type="InterPro" id="IPR001912">
    <property type="entry name" value="Ribosomal_uS4_N"/>
</dbReference>
<dbReference type="InterPro" id="IPR002942">
    <property type="entry name" value="S4_RNA-bd"/>
</dbReference>
<dbReference type="InterPro" id="IPR036986">
    <property type="entry name" value="S4_RNA-bd_sf"/>
</dbReference>
<dbReference type="NCBIfam" id="NF003717">
    <property type="entry name" value="PRK05327.1"/>
    <property type="match status" value="1"/>
</dbReference>
<dbReference type="NCBIfam" id="TIGR01017">
    <property type="entry name" value="rpsD_bact"/>
    <property type="match status" value="1"/>
</dbReference>
<dbReference type="PANTHER" id="PTHR11831">
    <property type="entry name" value="30S 40S RIBOSOMAL PROTEIN"/>
    <property type="match status" value="1"/>
</dbReference>
<dbReference type="PANTHER" id="PTHR11831:SF4">
    <property type="entry name" value="SMALL RIBOSOMAL SUBUNIT PROTEIN US4M"/>
    <property type="match status" value="1"/>
</dbReference>
<dbReference type="Pfam" id="PF00163">
    <property type="entry name" value="Ribosomal_S4"/>
    <property type="match status" value="1"/>
</dbReference>
<dbReference type="Pfam" id="PF01479">
    <property type="entry name" value="S4"/>
    <property type="match status" value="1"/>
</dbReference>
<dbReference type="SMART" id="SM01390">
    <property type="entry name" value="Ribosomal_S4"/>
    <property type="match status" value="1"/>
</dbReference>
<dbReference type="SMART" id="SM00363">
    <property type="entry name" value="S4"/>
    <property type="match status" value="1"/>
</dbReference>
<dbReference type="SUPFAM" id="SSF55174">
    <property type="entry name" value="Alpha-L RNA-binding motif"/>
    <property type="match status" value="1"/>
</dbReference>
<dbReference type="PROSITE" id="PS00632">
    <property type="entry name" value="RIBOSOMAL_S4"/>
    <property type="match status" value="1"/>
</dbReference>
<dbReference type="PROSITE" id="PS50889">
    <property type="entry name" value="S4"/>
    <property type="match status" value="1"/>
</dbReference>
<geneLocation type="chloroplast"/>
<gene>
    <name type="primary">rps4</name>
</gene>
<protein>
    <recommendedName>
        <fullName evidence="3">Small ribosomal subunit protein uS4c</fullName>
    </recommendedName>
    <alternativeName>
        <fullName>30S ribosomal protein S4, chloroplastic</fullName>
    </alternativeName>
</protein>
<sequence length="196" mass="22827">MSRYRGPRLKKIRRLGALPGLTRKTPKSGSNQKKKFHSGKKEQYRIRLQEKQKLRFHYGLTERQLLRYVHIAGKAKRSTGQVLLQLLEMRLDNILFRLGMASTIPGARQLVNHRHILVNGRIVDIPSFRCKPRDIITTKDNQRSKRLVQNYIASSDPGKLPKHLTVDTLQYKGLVKKILDRKWVGLKINELLVVEY</sequence>
<keyword id="KW-0150">Chloroplast</keyword>
<keyword id="KW-0934">Plastid</keyword>
<keyword id="KW-0687">Ribonucleoprotein</keyword>
<keyword id="KW-0689">Ribosomal protein</keyword>
<keyword id="KW-0694">RNA-binding</keyword>
<keyword id="KW-0699">rRNA-binding</keyword>
<feature type="chain" id="PRO_0000132531" description="Small ribosomal subunit protein uS4c">
    <location>
        <begin position="1"/>
        <end position="196" status="greater than"/>
    </location>
</feature>
<feature type="domain" description="S4 RNA-binding">
    <location>
        <begin position="89"/>
        <end position="150"/>
    </location>
</feature>
<feature type="region of interest" description="Disordered" evidence="2">
    <location>
        <begin position="15"/>
        <end position="43"/>
    </location>
</feature>
<feature type="non-terminal residue">
    <location>
        <position position="196"/>
    </location>
</feature>
<proteinExistence type="inferred from homology"/>
<accession>P69631</accession>
<accession>P36446</accession>
<accession>P36474</accession>
<reference key="1">
    <citation type="journal article" date="1994" name="Plant Syst. Evol.">
        <title>The chloroplast gene rps4 as a tool for the study of Poaceae phylogeny.</title>
        <authorList>
            <person name="Nadot S."/>
            <person name="Bajon R."/>
            <person name="Lejeune B."/>
        </authorList>
        <dbReference type="AGRICOLA" id="IND20417698"/>
    </citation>
    <scope>NUCLEOTIDE SEQUENCE [GENOMIC DNA]</scope>
</reference>
<comment type="function">
    <text evidence="1">One of the primary rRNA binding proteins, it binds directly to 16S rRNA where it nucleates assembly of the body of the 30S subunit.</text>
</comment>
<comment type="function">
    <text evidence="1">With S5 and S12 plays an important role in translational accuracy.</text>
</comment>
<comment type="subunit">
    <text evidence="1">Part of the 30S ribosomal subunit. Contacts protein S5. The interaction surface between S4 and S5 is involved in control of translational fidelity (By similarity).</text>
</comment>
<comment type="subcellular location">
    <subcellularLocation>
        <location>Plastid</location>
        <location>Chloroplast</location>
    </subcellularLocation>
</comment>
<comment type="similarity">
    <text evidence="3">Belongs to the universal ribosomal protein uS4 family.</text>
</comment>
<name>RR4_BOTIS</name>
<organism>
    <name type="scientific">Bothriochloa ischaemum</name>
    <name type="common">Yellow bluestem</name>
    <name type="synonym">Andropogon ischaemum</name>
    <dbReference type="NCBI Taxonomy" id="29660"/>
    <lineage>
        <taxon>Eukaryota</taxon>
        <taxon>Viridiplantae</taxon>
        <taxon>Streptophyta</taxon>
        <taxon>Embryophyta</taxon>
        <taxon>Tracheophyta</taxon>
        <taxon>Spermatophyta</taxon>
        <taxon>Magnoliopsida</taxon>
        <taxon>Liliopsida</taxon>
        <taxon>Poales</taxon>
        <taxon>Poaceae</taxon>
        <taxon>PACMAD clade</taxon>
        <taxon>Panicoideae</taxon>
        <taxon>Andropogonodae</taxon>
        <taxon>Andropogoneae</taxon>
        <taxon>Anthistiriinae</taxon>
        <taxon>Bothriochloa</taxon>
    </lineage>
</organism>